<reference key="1">
    <citation type="journal article" date="1985" name="Nucleic Acids Res.">
        <title>Structure and function of the region of the replication origin of the Bacillus subtilis chromosome. III. Nucleotide sequence of some 10,000 base pairs in the origin region.</title>
        <authorList>
            <person name="Moriya S."/>
            <person name="Ogasawara N."/>
            <person name="Yoshikawa H."/>
        </authorList>
    </citation>
    <scope>NUCLEOTIDE SEQUENCE [GENOMIC DNA]</scope>
</reference>
<reference key="2">
    <citation type="journal article" date="1994" name="DNA Res.">
        <title>Systematic sequencing of the 180 kilobase region of the Bacillus subtilis chromosome containing the replication origin.</title>
        <authorList>
            <person name="Ogasawara N."/>
            <person name="Nakai S."/>
            <person name="Yoshikawa H."/>
        </authorList>
    </citation>
    <scope>NUCLEOTIDE SEQUENCE [GENOMIC DNA]</scope>
    <source>
        <strain>168</strain>
    </source>
</reference>
<reference key="3">
    <citation type="journal article" date="1997" name="Nature">
        <title>The complete genome sequence of the Gram-positive bacterium Bacillus subtilis.</title>
        <authorList>
            <person name="Kunst F."/>
            <person name="Ogasawara N."/>
            <person name="Moszer I."/>
            <person name="Albertini A.M."/>
            <person name="Alloni G."/>
            <person name="Azevedo V."/>
            <person name="Bertero M.G."/>
            <person name="Bessieres P."/>
            <person name="Bolotin A."/>
            <person name="Borchert S."/>
            <person name="Borriss R."/>
            <person name="Boursier L."/>
            <person name="Brans A."/>
            <person name="Braun M."/>
            <person name="Brignell S.C."/>
            <person name="Bron S."/>
            <person name="Brouillet S."/>
            <person name="Bruschi C.V."/>
            <person name="Caldwell B."/>
            <person name="Capuano V."/>
            <person name="Carter N.M."/>
            <person name="Choi S.-K."/>
            <person name="Codani J.-J."/>
            <person name="Connerton I.F."/>
            <person name="Cummings N.J."/>
            <person name="Daniel R.A."/>
            <person name="Denizot F."/>
            <person name="Devine K.M."/>
            <person name="Duesterhoeft A."/>
            <person name="Ehrlich S.D."/>
            <person name="Emmerson P.T."/>
            <person name="Entian K.-D."/>
            <person name="Errington J."/>
            <person name="Fabret C."/>
            <person name="Ferrari E."/>
            <person name="Foulger D."/>
            <person name="Fritz C."/>
            <person name="Fujita M."/>
            <person name="Fujita Y."/>
            <person name="Fuma S."/>
            <person name="Galizzi A."/>
            <person name="Galleron N."/>
            <person name="Ghim S.-Y."/>
            <person name="Glaser P."/>
            <person name="Goffeau A."/>
            <person name="Golightly E.J."/>
            <person name="Grandi G."/>
            <person name="Guiseppi G."/>
            <person name="Guy B.J."/>
            <person name="Haga K."/>
            <person name="Haiech J."/>
            <person name="Harwood C.R."/>
            <person name="Henaut A."/>
            <person name="Hilbert H."/>
            <person name="Holsappel S."/>
            <person name="Hosono S."/>
            <person name="Hullo M.-F."/>
            <person name="Itaya M."/>
            <person name="Jones L.-M."/>
            <person name="Joris B."/>
            <person name="Karamata D."/>
            <person name="Kasahara Y."/>
            <person name="Klaerr-Blanchard M."/>
            <person name="Klein C."/>
            <person name="Kobayashi Y."/>
            <person name="Koetter P."/>
            <person name="Koningstein G."/>
            <person name="Krogh S."/>
            <person name="Kumano M."/>
            <person name="Kurita K."/>
            <person name="Lapidus A."/>
            <person name="Lardinois S."/>
            <person name="Lauber J."/>
            <person name="Lazarevic V."/>
            <person name="Lee S.-M."/>
            <person name="Levine A."/>
            <person name="Liu H."/>
            <person name="Masuda S."/>
            <person name="Mauel C."/>
            <person name="Medigue C."/>
            <person name="Medina N."/>
            <person name="Mellado R.P."/>
            <person name="Mizuno M."/>
            <person name="Moestl D."/>
            <person name="Nakai S."/>
            <person name="Noback M."/>
            <person name="Noone D."/>
            <person name="O'Reilly M."/>
            <person name="Ogawa K."/>
            <person name="Ogiwara A."/>
            <person name="Oudega B."/>
            <person name="Park S.-H."/>
            <person name="Parro V."/>
            <person name="Pohl T.M."/>
            <person name="Portetelle D."/>
            <person name="Porwollik S."/>
            <person name="Prescott A.M."/>
            <person name="Presecan E."/>
            <person name="Pujic P."/>
            <person name="Purnelle B."/>
            <person name="Rapoport G."/>
            <person name="Rey M."/>
            <person name="Reynolds S."/>
            <person name="Rieger M."/>
            <person name="Rivolta C."/>
            <person name="Rocha E."/>
            <person name="Roche B."/>
            <person name="Rose M."/>
            <person name="Sadaie Y."/>
            <person name="Sato T."/>
            <person name="Scanlan E."/>
            <person name="Schleich S."/>
            <person name="Schroeter R."/>
            <person name="Scoffone F."/>
            <person name="Sekiguchi J."/>
            <person name="Sekowska A."/>
            <person name="Seror S.J."/>
            <person name="Serror P."/>
            <person name="Shin B.-S."/>
            <person name="Soldo B."/>
            <person name="Sorokin A."/>
            <person name="Tacconi E."/>
            <person name="Takagi T."/>
            <person name="Takahashi H."/>
            <person name="Takemaru K."/>
            <person name="Takeuchi M."/>
            <person name="Tamakoshi A."/>
            <person name="Tanaka T."/>
            <person name="Terpstra P."/>
            <person name="Tognoni A."/>
            <person name="Tosato V."/>
            <person name="Uchiyama S."/>
            <person name="Vandenbol M."/>
            <person name="Vannier F."/>
            <person name="Vassarotti A."/>
            <person name="Viari A."/>
            <person name="Wambutt R."/>
            <person name="Wedler E."/>
            <person name="Wedler H."/>
            <person name="Weitzenegger T."/>
            <person name="Winters P."/>
            <person name="Wipat A."/>
            <person name="Yamamoto H."/>
            <person name="Yamane K."/>
            <person name="Yasumoto K."/>
            <person name="Yata K."/>
            <person name="Yoshida K."/>
            <person name="Yoshikawa H.-F."/>
            <person name="Zumstein E."/>
            <person name="Yoshikawa H."/>
            <person name="Danchin A."/>
        </authorList>
    </citation>
    <scope>NUCLEOTIDE SEQUENCE [LARGE SCALE GENOMIC DNA]</scope>
    <source>
        <strain>168</strain>
    </source>
</reference>
<comment type="function">
    <text evidence="1">A type II topoisomerase that negatively supercoils closed circular double-stranded (ds) DNA in an ATP-dependent manner to modulate DNA topology and maintain chromosomes in an underwound state. Negative supercoiling favors strand separation, and DNA replication, transcription, recombination and repair, all of which involve strand separation. Also able to catalyze the interconversion of other topological isomers of dsDNA rings, including catenanes and knotted rings. Type II topoisomerases break and join 2 DNA strands simultaneously in an ATP-dependent manner.</text>
</comment>
<comment type="catalytic activity">
    <reaction evidence="1">
        <text>ATP-dependent breakage, passage and rejoining of double-stranded DNA.</text>
        <dbReference type="EC" id="5.6.2.2"/>
    </reaction>
</comment>
<comment type="subunit">
    <text evidence="1">Heterotetramer, composed of two GyrA and two GyrB chains. In the heterotetramer, GyrA contains the active site tyrosine that forms a transient covalent intermediate with DNA, while GyrB binds cofactors and catalyzes ATP hydrolysis.</text>
</comment>
<comment type="subcellular location">
    <subcellularLocation>
        <location evidence="1">Cytoplasm</location>
    </subcellularLocation>
</comment>
<comment type="miscellaneous">
    <text evidence="1">Few gyrases are as efficient as E.coli at forming negative supercoils. Not all organisms have 2 type II topoisomerases; in organisms with a single type II topoisomerase this enzyme also has to decatenate newly replicated chromosomes.</text>
</comment>
<comment type="similarity">
    <text evidence="1">Belongs to the type II topoisomerase GyrA/ParC subunit family.</text>
</comment>
<gene>
    <name evidence="1" type="primary">gyrA</name>
    <name type="synonym">cafB</name>
    <name type="synonym">nalA</name>
    <name type="ordered locus">BSU00070</name>
</gene>
<evidence type="ECO:0000255" key="1">
    <source>
        <dbReference type="HAMAP-Rule" id="MF_01897"/>
    </source>
</evidence>
<evidence type="ECO:0000255" key="2">
    <source>
        <dbReference type="PROSITE-ProRule" id="PRU01384"/>
    </source>
</evidence>
<evidence type="ECO:0007829" key="3">
    <source>
        <dbReference type="PDB" id="4DDQ"/>
    </source>
</evidence>
<name>GYRA_BACSU</name>
<sequence>MSEQNTPQVREINISQEMRTSFLDYAMSVIVSRALPDVRDGLKPVHRRILYAMNDLGMTSDKPYKKSARIVGEVIGKYHPHGDSAVYESMVRMAQDFNYRYMLVDGHGNFGSVDGDSAAAMRYTEARMSKISMEILRDITKDTIDYQDNYDGSEREPVVMPSRFPNLLVNGAAGIAVGMATNIPPHQLGEIIDGVLAVSENPDITIPELMEVIPGPDFPTAGQILGRSGIRKAYESGRGSITIRAKAEIEQTSSGKERIIVTELPYQVNKAKLIEKIADLVRDKKIEGITDLRDESDRTGMRIVIEIRRDANANVILNNLYKQTALQTSFGINLLALVDGQPKVLTLKQCLEHYLDHQKVVIRRRTAYELRKAEARAHILEGLRVALDHLDAVISLIRNSQTAEIARTGLIEQFSLTEKQAQAILDMRLQRLTGLEREKIEEEYQSLVKLIAELKDILANEYKVLEIIREELTEIKERFNDERRTEIVTSGLETIEDEDLIERENIVVTLTHNGYVKRLPASTYRSQKRGGKGVQGMGTNEDDFVEHLISTSTHDTILFFSNKGKVYRAKGYEIPEYGRTAKGIPIINLLEVEKGEWINAIIPVTEFNAELYLFFTTKHGVSKRTSLSQFANIRNNGLIALSLREDDELMGVRLTDGTKQIIIGTKNGLLIRFPETDVREMGRTAAGVKGITLTDDDVVVGMEILEEESHVLIVTEKGYGKRTPAEEYRTQSRGGKGLKTAKITENNGQLVAVKATKGEEDLMIITASGVLIRMDINDISITGRVTQGVRLIRMAEEEHVATVALVEKNEEDENEEEQEEV</sequence>
<protein>
    <recommendedName>
        <fullName evidence="1">DNA gyrase subunit A</fullName>
        <ecNumber evidence="1">5.6.2.2</ecNumber>
    </recommendedName>
</protein>
<organism>
    <name type="scientific">Bacillus subtilis (strain 168)</name>
    <dbReference type="NCBI Taxonomy" id="224308"/>
    <lineage>
        <taxon>Bacteria</taxon>
        <taxon>Bacillati</taxon>
        <taxon>Bacillota</taxon>
        <taxon>Bacilli</taxon>
        <taxon>Bacillales</taxon>
        <taxon>Bacillaceae</taxon>
        <taxon>Bacillus</taxon>
    </lineage>
</organism>
<feature type="chain" id="PRO_0000145221" description="DNA gyrase subunit A">
    <location>
        <begin position="1"/>
        <end position="821"/>
    </location>
</feature>
<feature type="domain" description="Topo IIA-type catalytic" evidence="2">
    <location>
        <begin position="35"/>
        <end position="500"/>
    </location>
</feature>
<feature type="short sequence motif" description="GyrA-box" evidence="1">
    <location>
        <begin position="527"/>
        <end position="533"/>
    </location>
</feature>
<feature type="active site" description="O-(5'-phospho-DNA)-tyrosine intermediate" evidence="1">
    <location>
        <position position="123"/>
    </location>
</feature>
<feature type="turn" evidence="3">
    <location>
        <begin position="38"/>
        <end position="40"/>
    </location>
</feature>
<feature type="helix" evidence="3">
    <location>
        <begin position="44"/>
        <end position="55"/>
    </location>
</feature>
<feature type="strand" evidence="3">
    <location>
        <begin position="60"/>
        <end position="62"/>
    </location>
</feature>
<feature type="strand" evidence="3">
    <location>
        <begin position="64"/>
        <end position="66"/>
    </location>
</feature>
<feature type="helix" evidence="3">
    <location>
        <begin position="67"/>
        <end position="77"/>
    </location>
</feature>
<feature type="helix" evidence="3">
    <location>
        <begin position="82"/>
        <end position="92"/>
    </location>
</feature>
<feature type="turn" evidence="3">
    <location>
        <begin position="96"/>
        <end position="98"/>
    </location>
</feature>
<feature type="strand" evidence="3">
    <location>
        <begin position="103"/>
        <end position="108"/>
    </location>
</feature>
<feature type="strand" evidence="3">
    <location>
        <begin position="125"/>
        <end position="128"/>
    </location>
</feature>
<feature type="helix" evidence="3">
    <location>
        <begin position="132"/>
        <end position="136"/>
    </location>
</feature>
<feature type="strand" evidence="3">
    <location>
        <begin position="146"/>
        <end position="148"/>
    </location>
</feature>
<feature type="strand" evidence="3">
    <location>
        <begin position="152"/>
        <end position="159"/>
    </location>
</feature>
<feature type="helix" evidence="3">
    <location>
        <begin position="166"/>
        <end position="170"/>
    </location>
</feature>
<feature type="strand" evidence="3">
    <location>
        <begin position="172"/>
        <end position="176"/>
    </location>
</feature>
<feature type="strand" evidence="3">
    <location>
        <begin position="179"/>
        <end position="183"/>
    </location>
</feature>
<feature type="helix" evidence="3">
    <location>
        <begin position="188"/>
        <end position="200"/>
    </location>
</feature>
<feature type="helix" evidence="3">
    <location>
        <begin position="206"/>
        <end position="210"/>
    </location>
</feature>
<feature type="strand" evidence="3">
    <location>
        <begin position="222"/>
        <end position="224"/>
    </location>
</feature>
<feature type="helix" evidence="3">
    <location>
        <begin position="227"/>
        <end position="236"/>
    </location>
</feature>
<feature type="strand" evidence="3">
    <location>
        <begin position="237"/>
        <end position="244"/>
    </location>
</feature>
<feature type="strand" evidence="3">
    <location>
        <begin position="246"/>
        <end position="251"/>
    </location>
</feature>
<feature type="strand" evidence="3">
    <location>
        <begin position="257"/>
        <end position="263"/>
    </location>
</feature>
<feature type="helix" evidence="3">
    <location>
        <begin position="270"/>
        <end position="282"/>
    </location>
</feature>
<feature type="strand" evidence="3">
    <location>
        <begin position="289"/>
        <end position="294"/>
    </location>
</feature>
<feature type="strand" evidence="3">
    <location>
        <begin position="303"/>
        <end position="307"/>
    </location>
</feature>
<feature type="helix" evidence="3">
    <location>
        <begin position="313"/>
        <end position="323"/>
    </location>
</feature>
<feature type="strand" evidence="3">
    <location>
        <begin position="324"/>
        <end position="333"/>
    </location>
</feature>
<feature type="strand" evidence="3">
    <location>
        <begin position="335"/>
        <end position="344"/>
    </location>
</feature>
<feature type="helix" evidence="3">
    <location>
        <begin position="347"/>
        <end position="388"/>
    </location>
</feature>
<feature type="helix" evidence="3">
    <location>
        <begin position="390"/>
        <end position="398"/>
    </location>
</feature>
<feature type="helix" evidence="3">
    <location>
        <begin position="403"/>
        <end position="414"/>
    </location>
</feature>
<feature type="helix" evidence="3">
    <location>
        <begin position="418"/>
        <end position="425"/>
    </location>
</feature>
<feature type="helix" evidence="3">
    <location>
        <begin position="429"/>
        <end position="432"/>
    </location>
</feature>
<feature type="helix" evidence="3">
    <location>
        <begin position="434"/>
        <end position="459"/>
    </location>
</feature>
<feature type="helix" evidence="3">
    <location>
        <begin position="461"/>
        <end position="479"/>
    </location>
</feature>
<feature type="strand" evidence="3">
    <location>
        <begin position="485"/>
        <end position="487"/>
    </location>
</feature>
<keyword id="KW-0002">3D-structure</keyword>
<keyword id="KW-0067">ATP-binding</keyword>
<keyword id="KW-0963">Cytoplasm</keyword>
<keyword id="KW-0238">DNA-binding</keyword>
<keyword id="KW-0413">Isomerase</keyword>
<keyword id="KW-0547">Nucleotide-binding</keyword>
<keyword id="KW-1185">Reference proteome</keyword>
<keyword id="KW-0799">Topoisomerase</keyword>
<dbReference type="EC" id="5.6.2.2" evidence="1"/>
<dbReference type="EMBL" id="X02369">
    <property type="protein sequence ID" value="CAA26222.1"/>
    <property type="molecule type" value="Genomic_DNA"/>
</dbReference>
<dbReference type="EMBL" id="D26185">
    <property type="protein sequence ID" value="BAA05243.1"/>
    <property type="molecule type" value="Genomic_DNA"/>
</dbReference>
<dbReference type="EMBL" id="AL009126">
    <property type="protein sequence ID" value="CAB11783.1"/>
    <property type="molecule type" value="Genomic_DNA"/>
</dbReference>
<dbReference type="PIR" id="F22930">
    <property type="entry name" value="F22930"/>
</dbReference>
<dbReference type="RefSeq" id="NP_387888.1">
    <property type="nucleotide sequence ID" value="NC_000964.3"/>
</dbReference>
<dbReference type="RefSeq" id="WP_003244540.1">
    <property type="nucleotide sequence ID" value="NZ_OZ025638.1"/>
</dbReference>
<dbReference type="PDB" id="4DDQ">
    <property type="method" value="X-ray"/>
    <property type="resolution" value="3.30 A"/>
    <property type="chains" value="A/B/C/D/E/F=1-502"/>
</dbReference>
<dbReference type="PDBsum" id="4DDQ"/>
<dbReference type="SMR" id="P05653"/>
<dbReference type="FunCoup" id="P05653">
    <property type="interactions" value="561"/>
</dbReference>
<dbReference type="IntAct" id="P05653">
    <property type="interactions" value="5"/>
</dbReference>
<dbReference type="MINT" id="P05653"/>
<dbReference type="STRING" id="224308.BSU00070"/>
<dbReference type="BindingDB" id="P05653"/>
<dbReference type="DrugBank" id="DB00537">
    <property type="generic name" value="Ciprofloxacin"/>
</dbReference>
<dbReference type="jPOST" id="P05653"/>
<dbReference type="PaxDb" id="224308-BSU00070"/>
<dbReference type="EnsemblBacteria" id="CAB11783">
    <property type="protein sequence ID" value="CAB11783"/>
    <property type="gene ID" value="BSU_00070"/>
</dbReference>
<dbReference type="GeneID" id="940002"/>
<dbReference type="KEGG" id="bsu:BSU00070"/>
<dbReference type="PATRIC" id="fig|224308.179.peg.7"/>
<dbReference type="eggNOG" id="COG0188">
    <property type="taxonomic scope" value="Bacteria"/>
</dbReference>
<dbReference type="InParanoid" id="P05653"/>
<dbReference type="OrthoDB" id="9806486at2"/>
<dbReference type="PhylomeDB" id="P05653"/>
<dbReference type="BioCyc" id="BSUB:BSU00070-MONOMER"/>
<dbReference type="EvolutionaryTrace" id="P05653"/>
<dbReference type="Proteomes" id="UP000001570">
    <property type="component" value="Chromosome"/>
</dbReference>
<dbReference type="GO" id="GO:0005694">
    <property type="term" value="C:chromosome"/>
    <property type="evidence" value="ECO:0007669"/>
    <property type="project" value="InterPro"/>
</dbReference>
<dbReference type="GO" id="GO:0005737">
    <property type="term" value="C:cytoplasm"/>
    <property type="evidence" value="ECO:0000318"/>
    <property type="project" value="GO_Central"/>
</dbReference>
<dbReference type="GO" id="GO:0009330">
    <property type="term" value="C:DNA topoisomerase type II (double strand cut, ATP-hydrolyzing) complex"/>
    <property type="evidence" value="ECO:0000318"/>
    <property type="project" value="GO_Central"/>
</dbReference>
<dbReference type="GO" id="GO:0005524">
    <property type="term" value="F:ATP binding"/>
    <property type="evidence" value="ECO:0000318"/>
    <property type="project" value="GO_Central"/>
</dbReference>
<dbReference type="GO" id="GO:0003677">
    <property type="term" value="F:DNA binding"/>
    <property type="evidence" value="ECO:0000318"/>
    <property type="project" value="GO_Central"/>
</dbReference>
<dbReference type="GO" id="GO:0034335">
    <property type="term" value="F:DNA negative supercoiling activity"/>
    <property type="evidence" value="ECO:0007669"/>
    <property type="project" value="UniProtKB-ARBA"/>
</dbReference>
<dbReference type="GO" id="GO:0006265">
    <property type="term" value="P:DNA topological change"/>
    <property type="evidence" value="ECO:0000318"/>
    <property type="project" value="GO_Central"/>
</dbReference>
<dbReference type="GO" id="GO:0006261">
    <property type="term" value="P:DNA-templated DNA replication"/>
    <property type="evidence" value="ECO:0007669"/>
    <property type="project" value="UniProtKB-UniRule"/>
</dbReference>
<dbReference type="CDD" id="cd00187">
    <property type="entry name" value="TOP4c"/>
    <property type="match status" value="1"/>
</dbReference>
<dbReference type="FunFam" id="1.10.268.10:FF:000001">
    <property type="entry name" value="DNA gyrase subunit A"/>
    <property type="match status" value="1"/>
</dbReference>
<dbReference type="FunFam" id="2.120.10.90:FF:000004">
    <property type="entry name" value="DNA gyrase subunit A"/>
    <property type="match status" value="1"/>
</dbReference>
<dbReference type="FunFam" id="3.30.1360.40:FF:000002">
    <property type="entry name" value="DNA gyrase subunit A"/>
    <property type="match status" value="1"/>
</dbReference>
<dbReference type="FunFam" id="3.90.199.10:FF:000001">
    <property type="entry name" value="DNA gyrase subunit A"/>
    <property type="match status" value="1"/>
</dbReference>
<dbReference type="Gene3D" id="3.30.1360.40">
    <property type="match status" value="1"/>
</dbReference>
<dbReference type="Gene3D" id="2.120.10.90">
    <property type="entry name" value="DNA gyrase/topoisomerase IV, subunit A, C-terminal"/>
    <property type="match status" value="1"/>
</dbReference>
<dbReference type="Gene3D" id="3.90.199.10">
    <property type="entry name" value="Topoisomerase II, domain 5"/>
    <property type="match status" value="1"/>
</dbReference>
<dbReference type="Gene3D" id="1.10.268.10">
    <property type="entry name" value="Topoisomerase, domain 3"/>
    <property type="match status" value="1"/>
</dbReference>
<dbReference type="HAMAP" id="MF_01897">
    <property type="entry name" value="GyrA"/>
    <property type="match status" value="1"/>
</dbReference>
<dbReference type="InterPro" id="IPR005743">
    <property type="entry name" value="GyrA"/>
</dbReference>
<dbReference type="InterPro" id="IPR006691">
    <property type="entry name" value="GyrA/parC_rep"/>
</dbReference>
<dbReference type="InterPro" id="IPR035516">
    <property type="entry name" value="Gyrase/topoIV_suA_C"/>
</dbReference>
<dbReference type="InterPro" id="IPR013760">
    <property type="entry name" value="Topo_IIA-like_dom_sf"/>
</dbReference>
<dbReference type="InterPro" id="IPR013758">
    <property type="entry name" value="Topo_IIA_A/C_ab"/>
</dbReference>
<dbReference type="InterPro" id="IPR013757">
    <property type="entry name" value="Topo_IIA_A_a_sf"/>
</dbReference>
<dbReference type="InterPro" id="IPR002205">
    <property type="entry name" value="Topo_IIA_dom_A"/>
</dbReference>
<dbReference type="InterPro" id="IPR050220">
    <property type="entry name" value="Type_II_DNA_Topoisomerases"/>
</dbReference>
<dbReference type="NCBIfam" id="TIGR01063">
    <property type="entry name" value="gyrA"/>
    <property type="match status" value="1"/>
</dbReference>
<dbReference type="NCBIfam" id="NF004043">
    <property type="entry name" value="PRK05560.1"/>
    <property type="match status" value="1"/>
</dbReference>
<dbReference type="NCBIfam" id="NF004044">
    <property type="entry name" value="PRK05561.1"/>
    <property type="match status" value="1"/>
</dbReference>
<dbReference type="PANTHER" id="PTHR43493:SF5">
    <property type="entry name" value="DNA GYRASE SUBUNIT A, CHLOROPLASTIC_MITOCHONDRIAL"/>
    <property type="match status" value="1"/>
</dbReference>
<dbReference type="PANTHER" id="PTHR43493">
    <property type="entry name" value="DNA GYRASE/TOPOISOMERASE SUBUNIT A"/>
    <property type="match status" value="1"/>
</dbReference>
<dbReference type="Pfam" id="PF03989">
    <property type="entry name" value="DNA_gyraseA_C"/>
    <property type="match status" value="6"/>
</dbReference>
<dbReference type="Pfam" id="PF00521">
    <property type="entry name" value="DNA_topoisoIV"/>
    <property type="match status" value="1"/>
</dbReference>
<dbReference type="SMART" id="SM00434">
    <property type="entry name" value="TOP4c"/>
    <property type="match status" value="1"/>
</dbReference>
<dbReference type="SUPFAM" id="SSF101904">
    <property type="entry name" value="GyrA/ParC C-terminal domain-like"/>
    <property type="match status" value="1"/>
</dbReference>
<dbReference type="SUPFAM" id="SSF56719">
    <property type="entry name" value="Type II DNA topoisomerase"/>
    <property type="match status" value="1"/>
</dbReference>
<dbReference type="PROSITE" id="PS52040">
    <property type="entry name" value="TOPO_IIA"/>
    <property type="match status" value="1"/>
</dbReference>
<accession>P05653</accession>
<proteinExistence type="evidence at protein level"/>